<evidence type="ECO:0000255" key="1">
    <source>
        <dbReference type="HAMAP-Rule" id="MF_00820"/>
    </source>
</evidence>
<reference key="1">
    <citation type="journal article" date="2009" name="PLoS Genet.">
        <title>Organised genome dynamics in the Escherichia coli species results in highly diverse adaptive paths.</title>
        <authorList>
            <person name="Touchon M."/>
            <person name="Hoede C."/>
            <person name="Tenaillon O."/>
            <person name="Barbe V."/>
            <person name="Baeriswyl S."/>
            <person name="Bidet P."/>
            <person name="Bingen E."/>
            <person name="Bonacorsi S."/>
            <person name="Bouchier C."/>
            <person name="Bouvet O."/>
            <person name="Calteau A."/>
            <person name="Chiapello H."/>
            <person name="Clermont O."/>
            <person name="Cruveiller S."/>
            <person name="Danchin A."/>
            <person name="Diard M."/>
            <person name="Dossat C."/>
            <person name="Karoui M.E."/>
            <person name="Frapy E."/>
            <person name="Garry L."/>
            <person name="Ghigo J.M."/>
            <person name="Gilles A.M."/>
            <person name="Johnson J."/>
            <person name="Le Bouguenec C."/>
            <person name="Lescat M."/>
            <person name="Mangenot S."/>
            <person name="Martinez-Jehanne V."/>
            <person name="Matic I."/>
            <person name="Nassif X."/>
            <person name="Oztas S."/>
            <person name="Petit M.A."/>
            <person name="Pichon C."/>
            <person name="Rouy Z."/>
            <person name="Ruf C.S."/>
            <person name="Schneider D."/>
            <person name="Tourret J."/>
            <person name="Vacherie B."/>
            <person name="Vallenet D."/>
            <person name="Medigue C."/>
            <person name="Rocha E.P.C."/>
            <person name="Denamur E."/>
        </authorList>
    </citation>
    <scope>NUCLEOTIDE SEQUENCE [LARGE SCALE GENOMIC DNA]</scope>
    <source>
        <strain>55989 / EAEC</strain>
    </source>
</reference>
<name>DLGD_ECO55</name>
<keyword id="KW-0963">Cytoplasm</keyword>
<keyword id="KW-0520">NAD</keyword>
<keyword id="KW-0560">Oxidoreductase</keyword>
<keyword id="KW-1185">Reference proteome</keyword>
<protein>
    <recommendedName>
        <fullName evidence="1">2,3-diketo-L-gulonate reductase</fullName>
        <shortName evidence="1">2,3-DKG reductase</shortName>
        <ecNumber evidence="1">1.1.1.130</ecNumber>
    </recommendedName>
    <alternativeName>
        <fullName evidence="1">3-dehydro-L-gulonate 2-dehydrogenase</fullName>
    </alternativeName>
</protein>
<sequence length="332" mass="36587">MKVTFEQLKAAFNRVLISRGVDSETADACAEMFARTTESGVYSHGVNRFPRFIQQLENGDIIPDAQPKRITSLGAIEQWDAQRSIGNLTAKKMMDRAIELAADHGIGLVALRNANHWMRGGSYGWQAAEKGYIGICWTNSIAVMPPWGAKECRIGTNPLIVAIPSTPITMVDMSMSMFSYGMLEVNRLAGRQLPVDGGFDDEGNLTKEPGVIEKNRRILPMGYWKGSGMSIVLDMIATLLSDGASVAEVTQDNSDEYGISQIFIAIEVDKLIDGPTRDAKLQRIMDYVTTAERADENQAIRLPGHEFTTLLAENRRNGITVDDSVWAKIQAL</sequence>
<organism>
    <name type="scientific">Escherichia coli (strain 55989 / EAEC)</name>
    <dbReference type="NCBI Taxonomy" id="585055"/>
    <lineage>
        <taxon>Bacteria</taxon>
        <taxon>Pseudomonadati</taxon>
        <taxon>Pseudomonadota</taxon>
        <taxon>Gammaproteobacteria</taxon>
        <taxon>Enterobacterales</taxon>
        <taxon>Enterobacteriaceae</taxon>
        <taxon>Escherichia</taxon>
    </lineage>
</organism>
<comment type="function">
    <text evidence="1">Catalyzes the reduction of 2,3-diketo-L-gulonate in the presence of NADH, to form 3-keto-L-gulonate.</text>
</comment>
<comment type="catalytic activity">
    <reaction evidence="1">
        <text>3-dehydro-L-gulonate + NAD(+) = 2,3-dioxo-L-gulonate + NADH + H(+)</text>
        <dbReference type="Rhea" id="RHEA:21924"/>
        <dbReference type="ChEBI" id="CHEBI:15378"/>
        <dbReference type="ChEBI" id="CHEBI:57441"/>
        <dbReference type="ChEBI" id="CHEBI:57540"/>
        <dbReference type="ChEBI" id="CHEBI:57655"/>
        <dbReference type="ChEBI" id="CHEBI:57945"/>
        <dbReference type="EC" id="1.1.1.130"/>
    </reaction>
</comment>
<comment type="catalytic activity">
    <reaction evidence="1">
        <text>3-dehydro-L-gulonate + NADP(+) = 2,3-dioxo-L-gulonate + NADPH + H(+)</text>
        <dbReference type="Rhea" id="RHEA:21928"/>
        <dbReference type="ChEBI" id="CHEBI:15378"/>
        <dbReference type="ChEBI" id="CHEBI:57441"/>
        <dbReference type="ChEBI" id="CHEBI:57655"/>
        <dbReference type="ChEBI" id="CHEBI:57783"/>
        <dbReference type="ChEBI" id="CHEBI:58349"/>
        <dbReference type="EC" id="1.1.1.130"/>
    </reaction>
</comment>
<comment type="subunit">
    <text evidence="1">Homodimer.</text>
</comment>
<comment type="subcellular location">
    <subcellularLocation>
        <location evidence="1">Cytoplasm</location>
    </subcellularLocation>
</comment>
<comment type="similarity">
    <text evidence="1">Belongs to the LDH2/MDH2 oxidoreductase family. DlgD subfamily.</text>
</comment>
<accession>B7L6Z1</accession>
<proteinExistence type="inferred from homology"/>
<dbReference type="EC" id="1.1.1.130" evidence="1"/>
<dbReference type="EMBL" id="CU928145">
    <property type="protein sequence ID" value="CAV00526.1"/>
    <property type="molecule type" value="Genomic_DNA"/>
</dbReference>
<dbReference type="SMR" id="B7L6Z1"/>
<dbReference type="KEGG" id="eck:EC55989_4032"/>
<dbReference type="HOGENOM" id="CLU_040452_4_0_6"/>
<dbReference type="Proteomes" id="UP000000746">
    <property type="component" value="Chromosome"/>
</dbReference>
<dbReference type="GO" id="GO:0005737">
    <property type="term" value="C:cytoplasm"/>
    <property type="evidence" value="ECO:0007669"/>
    <property type="project" value="UniProtKB-SubCell"/>
</dbReference>
<dbReference type="GO" id="GO:0047559">
    <property type="term" value="F:3-dehydro-L-gulonate 2-dehydrogenase activity"/>
    <property type="evidence" value="ECO:0007669"/>
    <property type="project" value="UniProtKB-UniRule"/>
</dbReference>
<dbReference type="GO" id="GO:0070403">
    <property type="term" value="F:NAD+ binding"/>
    <property type="evidence" value="ECO:0007669"/>
    <property type="project" value="InterPro"/>
</dbReference>
<dbReference type="FunFam" id="1.10.1530.10:FF:000001">
    <property type="entry name" value="2,3-diketo-L-gulonate reductase"/>
    <property type="match status" value="1"/>
</dbReference>
<dbReference type="Gene3D" id="1.10.1530.10">
    <property type="match status" value="1"/>
</dbReference>
<dbReference type="Gene3D" id="3.30.1370.60">
    <property type="entry name" value="Hypothetical oxidoreductase yiak, domain 2"/>
    <property type="match status" value="1"/>
</dbReference>
<dbReference type="Gene3D" id="3.30.60.50">
    <property type="entry name" value="Hypothetical oxidoreductase yiak, domain 3"/>
    <property type="match status" value="1"/>
</dbReference>
<dbReference type="HAMAP" id="MF_00820">
    <property type="entry name" value="Diketo_gul_reduc"/>
    <property type="match status" value="1"/>
</dbReference>
<dbReference type="InterPro" id="IPR023689">
    <property type="entry name" value="Diketo_gul_Rdtase"/>
</dbReference>
<dbReference type="InterPro" id="IPR043144">
    <property type="entry name" value="Mal/L-sulf/L-lact_DH-like_ah"/>
</dbReference>
<dbReference type="InterPro" id="IPR043143">
    <property type="entry name" value="Mal/L-sulf/L-lact_DH-like_NADP"/>
</dbReference>
<dbReference type="InterPro" id="IPR036111">
    <property type="entry name" value="Mal/L-sulfo/L-lacto_DH-like_sf"/>
</dbReference>
<dbReference type="InterPro" id="IPR003767">
    <property type="entry name" value="Malate/L-lactate_DH-like"/>
</dbReference>
<dbReference type="NCBIfam" id="NF009750">
    <property type="entry name" value="PRK13260.1"/>
    <property type="match status" value="1"/>
</dbReference>
<dbReference type="PANTHER" id="PTHR11091:SF3">
    <property type="entry name" value="2,3-DIKETO-L-GULONATE REDUCTASE"/>
    <property type="match status" value="1"/>
</dbReference>
<dbReference type="PANTHER" id="PTHR11091">
    <property type="entry name" value="OXIDOREDUCTASE-RELATED"/>
    <property type="match status" value="1"/>
</dbReference>
<dbReference type="Pfam" id="PF02615">
    <property type="entry name" value="Ldh_2"/>
    <property type="match status" value="1"/>
</dbReference>
<dbReference type="SUPFAM" id="SSF89733">
    <property type="entry name" value="L-sulfolactate dehydrogenase-like"/>
    <property type="match status" value="1"/>
</dbReference>
<feature type="chain" id="PRO_1000148689" description="2,3-diketo-L-gulonate reductase">
    <location>
        <begin position="1"/>
        <end position="332"/>
    </location>
</feature>
<feature type="active site" description="Proton donor" evidence="1">
    <location>
        <position position="44"/>
    </location>
</feature>
<feature type="binding site" evidence="1">
    <location>
        <begin position="168"/>
        <end position="174"/>
    </location>
    <ligand>
        <name>NAD(+)</name>
        <dbReference type="ChEBI" id="CHEBI:57540"/>
    </ligand>
</feature>
<feature type="binding site" evidence="1">
    <location>
        <begin position="224"/>
        <end position="225"/>
    </location>
    <ligand>
        <name>NAD(+)</name>
        <dbReference type="ChEBI" id="CHEBI:57540"/>
    </ligand>
</feature>
<feature type="binding site" evidence="1">
    <location>
        <begin position="304"/>
        <end position="306"/>
    </location>
    <ligand>
        <name>NAD(+)</name>
        <dbReference type="ChEBI" id="CHEBI:57540"/>
    </ligand>
</feature>
<gene>
    <name evidence="1" type="primary">dlgD</name>
    <name type="ordered locus">EC55989_4032</name>
</gene>